<reference key="1">
    <citation type="submission" date="2008-08" db="EMBL/GenBank/DDBJ databases">
        <title>Complete sequence of Anaeromyxobacter sp. K.</title>
        <authorList>
            <consortium name="US DOE Joint Genome Institute"/>
            <person name="Lucas S."/>
            <person name="Copeland A."/>
            <person name="Lapidus A."/>
            <person name="Glavina del Rio T."/>
            <person name="Dalin E."/>
            <person name="Tice H."/>
            <person name="Bruce D."/>
            <person name="Goodwin L."/>
            <person name="Pitluck S."/>
            <person name="Saunders E."/>
            <person name="Brettin T."/>
            <person name="Detter J.C."/>
            <person name="Han C."/>
            <person name="Larimer F."/>
            <person name="Land M."/>
            <person name="Hauser L."/>
            <person name="Kyrpides N."/>
            <person name="Ovchinnikiva G."/>
            <person name="Beliaev A."/>
        </authorList>
    </citation>
    <scope>NUCLEOTIDE SEQUENCE [LARGE SCALE GENOMIC DNA]</scope>
    <source>
        <strain>K</strain>
    </source>
</reference>
<comment type="function">
    <text evidence="1">Part of the MsrPQ system that repairs oxidized periplasmic proteins containing methionine sulfoxide residues (Met-O), using respiratory chain electrons. Thus protects these proteins from oxidative-stress damage caused by reactive species of oxygen and chlorine generated by the host defense mechanisms. MsrPQ is essential for the maintenance of envelope integrity under bleach stress, rescuing a wide series of structurally unrelated periplasmic proteins from methionine oxidation. The catalytic subunit MsrP is non-stereospecific, being able to reduce both (R-) and (S-) diastereoisomers of methionine sulfoxide.</text>
</comment>
<comment type="catalytic activity">
    <reaction evidence="1">
        <text>L-methionyl-[protein] + a quinone + H2O = L-methionyl-(S)-S-oxide-[protein] + a quinol</text>
        <dbReference type="Rhea" id="RHEA:51292"/>
        <dbReference type="Rhea" id="RHEA-COMP:12313"/>
        <dbReference type="Rhea" id="RHEA-COMP:12315"/>
        <dbReference type="ChEBI" id="CHEBI:15377"/>
        <dbReference type="ChEBI" id="CHEBI:16044"/>
        <dbReference type="ChEBI" id="CHEBI:24646"/>
        <dbReference type="ChEBI" id="CHEBI:44120"/>
        <dbReference type="ChEBI" id="CHEBI:132124"/>
    </reaction>
</comment>
<comment type="catalytic activity">
    <reaction evidence="1">
        <text>L-methionyl-[protein] + a quinone + H2O = L-methionyl-(R)-S-oxide-[protein] + a quinol</text>
        <dbReference type="Rhea" id="RHEA:51296"/>
        <dbReference type="Rhea" id="RHEA-COMP:12313"/>
        <dbReference type="Rhea" id="RHEA-COMP:12314"/>
        <dbReference type="ChEBI" id="CHEBI:15377"/>
        <dbReference type="ChEBI" id="CHEBI:16044"/>
        <dbReference type="ChEBI" id="CHEBI:24646"/>
        <dbReference type="ChEBI" id="CHEBI:45764"/>
        <dbReference type="ChEBI" id="CHEBI:132124"/>
    </reaction>
</comment>
<comment type="cofactor">
    <cofactor evidence="1">
        <name>Mo-molybdopterin</name>
        <dbReference type="ChEBI" id="CHEBI:71302"/>
    </cofactor>
    <text evidence="1">Binds 1 Mo-molybdopterin (Mo-MPT) cofactor per subunit.</text>
</comment>
<comment type="subunit">
    <text evidence="1">Heterodimer of a catalytic subunit (MsrP) and a heme-binding subunit (MsrQ).</text>
</comment>
<comment type="subcellular location">
    <subcellularLocation>
        <location evidence="1">Periplasm</location>
    </subcellularLocation>
    <text evidence="1">Is attached to the inner membrane when interacting with the MsrQ subunit.</text>
</comment>
<comment type="PTM">
    <text evidence="1">Predicted to be exported by the Tat system. The position of the signal peptide cleavage has not been experimentally proven.</text>
</comment>
<comment type="similarity">
    <text evidence="1">Belongs to the MsrP family.</text>
</comment>
<protein>
    <recommendedName>
        <fullName evidence="1">Protein-methionine-sulfoxide reductase catalytic subunit MsrP</fullName>
        <ecNumber evidence="1">1.8.5.-</ecNumber>
    </recommendedName>
</protein>
<feature type="signal peptide" description="Tat-type signal" evidence="1">
    <location>
        <begin position="1"/>
        <end position="44"/>
    </location>
</feature>
<feature type="chain" id="PRO_1000164655" description="Protein-methionine-sulfoxide reductase catalytic subunit MsrP" evidence="1">
    <location>
        <begin position="45"/>
        <end position="313"/>
    </location>
</feature>
<feature type="binding site" evidence="1">
    <location>
        <position position="76"/>
    </location>
    <ligand>
        <name>Mo-molybdopterin</name>
        <dbReference type="ChEBI" id="CHEBI:71302"/>
    </ligand>
</feature>
<feature type="binding site" evidence="1">
    <location>
        <begin position="79"/>
        <end position="80"/>
    </location>
    <ligand>
        <name>Mo-molybdopterin</name>
        <dbReference type="ChEBI" id="CHEBI:71302"/>
    </ligand>
</feature>
<feature type="binding site" evidence="1">
    <location>
        <position position="134"/>
    </location>
    <ligand>
        <name>Mo-molybdopterin</name>
        <dbReference type="ChEBI" id="CHEBI:71302"/>
    </ligand>
    <ligandPart>
        <name>Mo</name>
        <dbReference type="ChEBI" id="CHEBI:28685"/>
    </ligandPart>
</feature>
<feature type="binding site" evidence="1">
    <location>
        <position position="169"/>
    </location>
    <ligand>
        <name>Mo-molybdopterin</name>
        <dbReference type="ChEBI" id="CHEBI:71302"/>
    </ligand>
</feature>
<feature type="binding site" evidence="1">
    <location>
        <position position="217"/>
    </location>
    <ligand>
        <name>Mo-molybdopterin</name>
        <dbReference type="ChEBI" id="CHEBI:71302"/>
    </ligand>
</feature>
<feature type="binding site" evidence="1">
    <location>
        <position position="222"/>
    </location>
    <ligand>
        <name>Mo-molybdopterin</name>
        <dbReference type="ChEBI" id="CHEBI:71302"/>
    </ligand>
</feature>
<feature type="binding site" evidence="1">
    <location>
        <begin position="233"/>
        <end position="235"/>
    </location>
    <ligand>
        <name>Mo-molybdopterin</name>
        <dbReference type="ChEBI" id="CHEBI:71302"/>
    </ligand>
</feature>
<proteinExistence type="inferred from homology"/>
<evidence type="ECO:0000255" key="1">
    <source>
        <dbReference type="HAMAP-Rule" id="MF_01206"/>
    </source>
</evidence>
<accession>B4UGL0</accession>
<name>MSRP_ANASK</name>
<keyword id="KW-0479">Metal-binding</keyword>
<keyword id="KW-0500">Molybdenum</keyword>
<keyword id="KW-0560">Oxidoreductase</keyword>
<keyword id="KW-0574">Periplasm</keyword>
<keyword id="KW-0732">Signal</keyword>
<sequence length="313" mass="35243">MARWRPDMAEREATPEALYLRRREFLALGAAGAVGLLVARGARAGEPSGAALQVARRVDQAGGETPTPWDSVTGYNNFYELGTSKEDPSRNAGSLRARPWTVTIAGEVKRPQTLDVDALVRMFPPEERVYRMRCVEAWSMVIPWVGFPLADLVRRLEPTSRAKYVAFQTLLDRDQLPGQRRPVLPWPYVEALRIDEATHPLALLAVGLYGRALPGQNGAPLRLVVPWKYGFKGAKSIVRITFLADRPHTTWNDAAPDEYGFYANVNPEVDHPRWSQARERRIGEFFRRKTLPFNGYAAEVAPLYAGLDLRKNY</sequence>
<organism>
    <name type="scientific">Anaeromyxobacter sp. (strain K)</name>
    <dbReference type="NCBI Taxonomy" id="447217"/>
    <lineage>
        <taxon>Bacteria</taxon>
        <taxon>Pseudomonadati</taxon>
        <taxon>Myxococcota</taxon>
        <taxon>Myxococcia</taxon>
        <taxon>Myxococcales</taxon>
        <taxon>Cystobacterineae</taxon>
        <taxon>Anaeromyxobacteraceae</taxon>
        <taxon>Anaeromyxobacter</taxon>
    </lineage>
</organism>
<gene>
    <name evidence="1" type="primary">msrP</name>
    <name type="ordered locus">AnaeK_4088</name>
</gene>
<dbReference type="EC" id="1.8.5.-" evidence="1"/>
<dbReference type="EMBL" id="CP001131">
    <property type="protein sequence ID" value="ACG75292.1"/>
    <property type="molecule type" value="Genomic_DNA"/>
</dbReference>
<dbReference type="RefSeq" id="WP_012528045.1">
    <property type="nucleotide sequence ID" value="NC_011145.1"/>
</dbReference>
<dbReference type="SMR" id="B4UGL0"/>
<dbReference type="KEGG" id="ank:AnaeK_4088"/>
<dbReference type="HOGENOM" id="CLU_045520_0_0_7"/>
<dbReference type="OrthoDB" id="9795587at2"/>
<dbReference type="Proteomes" id="UP000001871">
    <property type="component" value="Chromosome"/>
</dbReference>
<dbReference type="GO" id="GO:0042597">
    <property type="term" value="C:periplasmic space"/>
    <property type="evidence" value="ECO:0007669"/>
    <property type="project" value="UniProtKB-SubCell"/>
</dbReference>
<dbReference type="GO" id="GO:0046872">
    <property type="term" value="F:metal ion binding"/>
    <property type="evidence" value="ECO:0007669"/>
    <property type="project" value="UniProtKB-KW"/>
</dbReference>
<dbReference type="GO" id="GO:0043546">
    <property type="term" value="F:molybdopterin cofactor binding"/>
    <property type="evidence" value="ECO:0007669"/>
    <property type="project" value="UniProtKB-UniRule"/>
</dbReference>
<dbReference type="GO" id="GO:0016672">
    <property type="term" value="F:oxidoreductase activity, acting on a sulfur group of donors, quinone or similar compound as acceptor"/>
    <property type="evidence" value="ECO:0007669"/>
    <property type="project" value="UniProtKB-UniRule"/>
</dbReference>
<dbReference type="GO" id="GO:0030091">
    <property type="term" value="P:protein repair"/>
    <property type="evidence" value="ECO:0007669"/>
    <property type="project" value="UniProtKB-UniRule"/>
</dbReference>
<dbReference type="Gene3D" id="3.90.420.10">
    <property type="entry name" value="Oxidoreductase, molybdopterin-binding domain"/>
    <property type="match status" value="1"/>
</dbReference>
<dbReference type="HAMAP" id="MF_01206">
    <property type="entry name" value="MsrP"/>
    <property type="match status" value="1"/>
</dbReference>
<dbReference type="InterPro" id="IPR022867">
    <property type="entry name" value="MsrP"/>
</dbReference>
<dbReference type="InterPro" id="IPR000572">
    <property type="entry name" value="OxRdtase_Mopterin-bd_dom"/>
</dbReference>
<dbReference type="InterPro" id="IPR036374">
    <property type="entry name" value="OxRdtase_Mopterin-bd_sf"/>
</dbReference>
<dbReference type="InterPro" id="IPR006311">
    <property type="entry name" value="TAT_signal"/>
</dbReference>
<dbReference type="NCBIfam" id="NF003767">
    <property type="entry name" value="PRK05363.1"/>
    <property type="match status" value="1"/>
</dbReference>
<dbReference type="PANTHER" id="PTHR43032">
    <property type="entry name" value="PROTEIN-METHIONINE-SULFOXIDE REDUCTASE"/>
    <property type="match status" value="1"/>
</dbReference>
<dbReference type="PANTHER" id="PTHR43032:SF3">
    <property type="entry name" value="PROTEIN-METHIONINE-SULFOXIDE REDUCTASE CATALYTIC SUBUNIT MSRP"/>
    <property type="match status" value="1"/>
</dbReference>
<dbReference type="Pfam" id="PF00174">
    <property type="entry name" value="Oxidored_molyb"/>
    <property type="match status" value="1"/>
</dbReference>
<dbReference type="SUPFAM" id="SSF56524">
    <property type="entry name" value="Oxidoreductase molybdopterin-binding domain"/>
    <property type="match status" value="1"/>
</dbReference>
<dbReference type="PROSITE" id="PS51318">
    <property type="entry name" value="TAT"/>
    <property type="match status" value="1"/>
</dbReference>